<comment type="subcellular location">
    <subcellularLocation>
        <location evidence="3">Membrane</location>
        <topology evidence="3">Multi-pass membrane protein</topology>
    </subcellularLocation>
</comment>
<comment type="similarity">
    <text evidence="3">Belongs to the TMEM229 family.</text>
</comment>
<evidence type="ECO:0000255" key="1"/>
<evidence type="ECO:0000256" key="2">
    <source>
        <dbReference type="SAM" id="MobiDB-lite"/>
    </source>
</evidence>
<evidence type="ECO:0000305" key="3"/>
<gene>
    <name type="primary">tmem229b</name>
    <name type="ORF">zgc:153098</name>
</gene>
<proteinExistence type="evidence at transcript level"/>
<keyword id="KW-0472">Membrane</keyword>
<keyword id="KW-1185">Reference proteome</keyword>
<keyword id="KW-0812">Transmembrane</keyword>
<keyword id="KW-1133">Transmembrane helix</keyword>
<organism>
    <name type="scientific">Danio rerio</name>
    <name type="common">Zebrafish</name>
    <name type="synonym">Brachydanio rerio</name>
    <dbReference type="NCBI Taxonomy" id="7955"/>
    <lineage>
        <taxon>Eukaryota</taxon>
        <taxon>Metazoa</taxon>
        <taxon>Chordata</taxon>
        <taxon>Craniata</taxon>
        <taxon>Vertebrata</taxon>
        <taxon>Euteleostomi</taxon>
        <taxon>Actinopterygii</taxon>
        <taxon>Neopterygii</taxon>
        <taxon>Teleostei</taxon>
        <taxon>Ostariophysi</taxon>
        <taxon>Cypriniformes</taxon>
        <taxon>Danionidae</taxon>
        <taxon>Danioninae</taxon>
        <taxon>Danio</taxon>
    </lineage>
</organism>
<name>T229B_DANRE</name>
<reference key="1">
    <citation type="submission" date="2006-09" db="EMBL/GenBank/DDBJ databases">
        <authorList>
            <consortium name="NIH - Zebrafish Gene Collection (ZGC) project"/>
        </authorList>
    </citation>
    <scope>NUCLEOTIDE SEQUENCE [LARGE SCALE MRNA]</scope>
    <source>
        <tissue>Larva</tissue>
    </source>
</reference>
<feature type="chain" id="PRO_0000359901" description="Transmembrane protein 229b">
    <location>
        <begin position="1"/>
        <end position="189"/>
    </location>
</feature>
<feature type="topological domain" description="Cytoplasmic" evidence="1">
    <location>
        <begin position="1"/>
        <end position="17"/>
    </location>
</feature>
<feature type="transmembrane region" description="Helical" evidence="1">
    <location>
        <begin position="18"/>
        <end position="38"/>
    </location>
</feature>
<feature type="topological domain" description="Extracellular" evidence="1">
    <location>
        <begin position="39"/>
        <end position="43"/>
    </location>
</feature>
<feature type="transmembrane region" description="Helical" evidence="1">
    <location>
        <begin position="44"/>
        <end position="64"/>
    </location>
</feature>
<feature type="topological domain" description="Cytoplasmic" evidence="1">
    <location>
        <begin position="65"/>
        <end position="75"/>
    </location>
</feature>
<feature type="transmembrane region" description="Helical" evidence="1">
    <location>
        <begin position="76"/>
        <end position="96"/>
    </location>
</feature>
<feature type="topological domain" description="Extracellular" evidence="1">
    <location>
        <begin position="97"/>
        <end position="114"/>
    </location>
</feature>
<feature type="transmembrane region" description="Helical" evidence="1">
    <location>
        <begin position="115"/>
        <end position="135"/>
    </location>
</feature>
<feature type="topological domain" description="Cytoplasmic" evidence="1">
    <location>
        <begin position="136"/>
        <end position="189"/>
    </location>
</feature>
<feature type="region of interest" description="Disordered" evidence="2">
    <location>
        <begin position="158"/>
        <end position="189"/>
    </location>
</feature>
<protein>
    <recommendedName>
        <fullName>Transmembrane protein 229b</fullName>
    </recommendedName>
</protein>
<accession>Q08CG9</accession>
<dbReference type="EMBL" id="BC124244">
    <property type="protein sequence ID" value="AAI24245.1"/>
    <property type="molecule type" value="mRNA"/>
</dbReference>
<dbReference type="RefSeq" id="NP_001070141.1">
    <property type="nucleotide sequence ID" value="NM_001076673.2"/>
</dbReference>
<dbReference type="FunCoup" id="Q08CG9">
    <property type="interactions" value="1017"/>
</dbReference>
<dbReference type="STRING" id="7955.ENSDARP00000128167"/>
<dbReference type="PaxDb" id="7955-ENSDARP00000128167"/>
<dbReference type="Ensembl" id="ENSDART00000085500">
    <property type="protein sequence ID" value="ENSDARP00000079935"/>
    <property type="gene ID" value="ENSDARG00000060569"/>
</dbReference>
<dbReference type="GeneID" id="767735"/>
<dbReference type="KEGG" id="dre:767735"/>
<dbReference type="AGR" id="ZFIN:ZDB-GENE-060929-1154"/>
<dbReference type="CTD" id="161145"/>
<dbReference type="ZFIN" id="ZDB-GENE-060929-1154">
    <property type="gene designation" value="tmem229b"/>
</dbReference>
<dbReference type="eggNOG" id="ENOG502QTFF">
    <property type="taxonomic scope" value="Eukaryota"/>
</dbReference>
<dbReference type="HOGENOM" id="CLU_102218_0_0_1"/>
<dbReference type="InParanoid" id="Q08CG9"/>
<dbReference type="OrthoDB" id="5946847at2759"/>
<dbReference type="PhylomeDB" id="Q08CG9"/>
<dbReference type="TreeFam" id="TF336481"/>
<dbReference type="PRO" id="PR:Q08CG9"/>
<dbReference type="Proteomes" id="UP000000437">
    <property type="component" value="Chromosome 17"/>
</dbReference>
<dbReference type="Bgee" id="ENSDARG00000060569">
    <property type="expression patterns" value="Expressed in retina and 18 other cell types or tissues"/>
</dbReference>
<dbReference type="ExpressionAtlas" id="Q08CG9">
    <property type="expression patterns" value="baseline"/>
</dbReference>
<dbReference type="GO" id="GO:0016020">
    <property type="term" value="C:membrane"/>
    <property type="evidence" value="ECO:0007669"/>
    <property type="project" value="UniProtKB-SubCell"/>
</dbReference>
<dbReference type="InterPro" id="IPR010540">
    <property type="entry name" value="CmpB_TMEM229"/>
</dbReference>
<dbReference type="PANTHER" id="PTHR31746">
    <property type="entry name" value="TRANSMEMBRANE PROTEIN 229 FAMILY MEMBER"/>
    <property type="match status" value="1"/>
</dbReference>
<dbReference type="PANTHER" id="PTHR31746:SF3">
    <property type="entry name" value="TRANSMEMBRANE PROTEIN 229B"/>
    <property type="match status" value="1"/>
</dbReference>
<dbReference type="Pfam" id="PF06541">
    <property type="entry name" value="ABC_trans_CmpB"/>
    <property type="match status" value="1"/>
</dbReference>
<sequence>MATTVTPEPLTALSRWYLYAIHGYFCEVMFTAAWEFVVNCNWKFPGVTSVWALFIYGTCILIVERMYLCLKDRCNVLLRCIIYTLWTYFWEFGTGFLLRQFNACPWDYSEFKYNFMGLITAEYAVPWFCASFIVERLVIRNTLRLRFDEVAESGQAEERLDRGGGGRGGRRGRGARAGATSANGYVKVD</sequence>